<protein>
    <recommendedName>
        <fullName>Uncharacterized urease accessory protein UreF-like</fullName>
    </recommendedName>
</protein>
<proteinExistence type="inferred from homology"/>
<accession>O14016</accession>
<organism>
    <name type="scientific">Schizosaccharomyces pombe (strain 972 / ATCC 24843)</name>
    <name type="common">Fission yeast</name>
    <dbReference type="NCBI Taxonomy" id="284812"/>
    <lineage>
        <taxon>Eukaryota</taxon>
        <taxon>Fungi</taxon>
        <taxon>Dikarya</taxon>
        <taxon>Ascomycota</taxon>
        <taxon>Taphrinomycotina</taxon>
        <taxon>Schizosaccharomycetes</taxon>
        <taxon>Schizosaccharomycetales</taxon>
        <taxon>Schizosaccharomycetaceae</taxon>
        <taxon>Schizosaccharomyces</taxon>
    </lineage>
</organism>
<sequence length="235" mass="26785">MTDSQTETHLSLILSDTAFPLSSFSYSYGLESYLSHQQVRDVNAFFNFLPLSLNSVLHTNLPTVKAAWESPQQYSEIEDFFESTQTCTIAQKVSTMQGKSLLNIWTKSLSFFVTSTDVFKYLDEYERRVRSKKALGHFPVVWGVVCRALGLSLERTCYLFLLGHAKSICSAAVRLDVLTSFQYVSTLAHPQTESLLRDSSQLALNMQLEDTAQSWYTLDLWQGRHSLLYSRIFNS</sequence>
<reference key="1">
    <citation type="journal article" date="2002" name="Nature">
        <title>The genome sequence of Schizosaccharomyces pombe.</title>
        <authorList>
            <person name="Wood V."/>
            <person name="Gwilliam R."/>
            <person name="Rajandream M.A."/>
            <person name="Lyne M.H."/>
            <person name="Lyne R."/>
            <person name="Stewart A."/>
            <person name="Sgouros J.G."/>
            <person name="Peat N."/>
            <person name="Hayles J."/>
            <person name="Baker S.G."/>
            <person name="Basham D."/>
            <person name="Bowman S."/>
            <person name="Brooks K."/>
            <person name="Brown D."/>
            <person name="Brown S."/>
            <person name="Chillingworth T."/>
            <person name="Churcher C.M."/>
            <person name="Collins M."/>
            <person name="Connor R."/>
            <person name="Cronin A."/>
            <person name="Davis P."/>
            <person name="Feltwell T."/>
            <person name="Fraser A."/>
            <person name="Gentles S."/>
            <person name="Goble A."/>
            <person name="Hamlin N."/>
            <person name="Harris D.E."/>
            <person name="Hidalgo J."/>
            <person name="Hodgson G."/>
            <person name="Holroyd S."/>
            <person name="Hornsby T."/>
            <person name="Howarth S."/>
            <person name="Huckle E.J."/>
            <person name="Hunt S."/>
            <person name="Jagels K."/>
            <person name="James K.D."/>
            <person name="Jones L."/>
            <person name="Jones M."/>
            <person name="Leather S."/>
            <person name="McDonald S."/>
            <person name="McLean J."/>
            <person name="Mooney P."/>
            <person name="Moule S."/>
            <person name="Mungall K.L."/>
            <person name="Murphy L.D."/>
            <person name="Niblett D."/>
            <person name="Odell C."/>
            <person name="Oliver K."/>
            <person name="O'Neil S."/>
            <person name="Pearson D."/>
            <person name="Quail M.A."/>
            <person name="Rabbinowitsch E."/>
            <person name="Rutherford K.M."/>
            <person name="Rutter S."/>
            <person name="Saunders D."/>
            <person name="Seeger K."/>
            <person name="Sharp S."/>
            <person name="Skelton J."/>
            <person name="Simmonds M.N."/>
            <person name="Squares R."/>
            <person name="Squares S."/>
            <person name="Stevens K."/>
            <person name="Taylor K."/>
            <person name="Taylor R.G."/>
            <person name="Tivey A."/>
            <person name="Walsh S.V."/>
            <person name="Warren T."/>
            <person name="Whitehead S."/>
            <person name="Woodward J.R."/>
            <person name="Volckaert G."/>
            <person name="Aert R."/>
            <person name="Robben J."/>
            <person name="Grymonprez B."/>
            <person name="Weltjens I."/>
            <person name="Vanstreels E."/>
            <person name="Rieger M."/>
            <person name="Schaefer M."/>
            <person name="Mueller-Auer S."/>
            <person name="Gabel C."/>
            <person name="Fuchs M."/>
            <person name="Duesterhoeft A."/>
            <person name="Fritzc C."/>
            <person name="Holzer E."/>
            <person name="Moestl D."/>
            <person name="Hilbert H."/>
            <person name="Borzym K."/>
            <person name="Langer I."/>
            <person name="Beck A."/>
            <person name="Lehrach H."/>
            <person name="Reinhardt R."/>
            <person name="Pohl T.M."/>
            <person name="Eger P."/>
            <person name="Zimmermann W."/>
            <person name="Wedler H."/>
            <person name="Wambutt R."/>
            <person name="Purnelle B."/>
            <person name="Goffeau A."/>
            <person name="Cadieu E."/>
            <person name="Dreano S."/>
            <person name="Gloux S."/>
            <person name="Lelaure V."/>
            <person name="Mottier S."/>
            <person name="Galibert F."/>
            <person name="Aves S.J."/>
            <person name="Xiang Z."/>
            <person name="Hunt C."/>
            <person name="Moore K."/>
            <person name="Hurst S.M."/>
            <person name="Lucas M."/>
            <person name="Rochet M."/>
            <person name="Gaillardin C."/>
            <person name="Tallada V.A."/>
            <person name="Garzon A."/>
            <person name="Thode G."/>
            <person name="Daga R.R."/>
            <person name="Cruzado L."/>
            <person name="Jimenez J."/>
            <person name="Sanchez M."/>
            <person name="del Rey F."/>
            <person name="Benito J."/>
            <person name="Dominguez A."/>
            <person name="Revuelta J.L."/>
            <person name="Moreno S."/>
            <person name="Armstrong J."/>
            <person name="Forsburg S.L."/>
            <person name="Cerutti L."/>
            <person name="Lowe T."/>
            <person name="McCombie W.R."/>
            <person name="Paulsen I."/>
            <person name="Potashkin J."/>
            <person name="Shpakovski G.V."/>
            <person name="Ussery D."/>
            <person name="Barrell B.G."/>
            <person name="Nurse P."/>
        </authorList>
    </citation>
    <scope>NUCLEOTIDE SEQUENCE [LARGE SCALE GENOMIC DNA]</scope>
    <source>
        <strain>972 / ATCC 24843</strain>
    </source>
</reference>
<reference key="2">
    <citation type="journal article" date="2006" name="Nat. Biotechnol.">
        <title>ORFeome cloning and global analysis of protein localization in the fission yeast Schizosaccharomyces pombe.</title>
        <authorList>
            <person name="Matsuyama A."/>
            <person name="Arai R."/>
            <person name="Yashiroda Y."/>
            <person name="Shirai A."/>
            <person name="Kamata A."/>
            <person name="Sekido S."/>
            <person name="Kobayashi Y."/>
            <person name="Hashimoto A."/>
            <person name="Hamamoto M."/>
            <person name="Hiraoka Y."/>
            <person name="Horinouchi S."/>
            <person name="Yoshida M."/>
        </authorList>
    </citation>
    <scope>SUBCELLULAR LOCATION [LARGE SCALE ANALYSIS]</scope>
</reference>
<feature type="chain" id="PRO_0000316578" description="Uncharacterized urease accessory protein UreF-like">
    <location>
        <begin position="1"/>
        <end position="235"/>
    </location>
</feature>
<gene>
    <name type="ORF">SPAC29A4.13</name>
</gene>
<dbReference type="EMBL" id="CU329670">
    <property type="protein sequence ID" value="CAB10140.1"/>
    <property type="molecule type" value="Genomic_DNA"/>
</dbReference>
<dbReference type="PIR" id="T38476">
    <property type="entry name" value="T38476"/>
</dbReference>
<dbReference type="SMR" id="O14016"/>
<dbReference type="BioGRID" id="278820">
    <property type="interactions" value="12"/>
</dbReference>
<dbReference type="FunCoup" id="O14016">
    <property type="interactions" value="10"/>
</dbReference>
<dbReference type="STRING" id="284812.O14016"/>
<dbReference type="PaxDb" id="4896-SPAC29A4.13.1"/>
<dbReference type="EnsemblFungi" id="SPAC29A4.13.1">
    <property type="protein sequence ID" value="SPAC29A4.13.1:pep"/>
    <property type="gene ID" value="SPAC29A4.13"/>
</dbReference>
<dbReference type="KEGG" id="spo:2542355"/>
<dbReference type="PomBase" id="SPAC29A4.13"/>
<dbReference type="VEuPathDB" id="FungiDB:SPAC29A4.13"/>
<dbReference type="eggNOG" id="ENOG502REVQ">
    <property type="taxonomic scope" value="Eukaryota"/>
</dbReference>
<dbReference type="HOGENOM" id="CLU_049215_0_0_1"/>
<dbReference type="InParanoid" id="O14016"/>
<dbReference type="OMA" id="WVGRHEK"/>
<dbReference type="PhylomeDB" id="O14016"/>
<dbReference type="PRO" id="PR:O14016"/>
<dbReference type="Proteomes" id="UP000002485">
    <property type="component" value="Chromosome I"/>
</dbReference>
<dbReference type="GO" id="GO:0005737">
    <property type="term" value="C:cytoplasm"/>
    <property type="evidence" value="ECO:0007005"/>
    <property type="project" value="PomBase"/>
</dbReference>
<dbReference type="GO" id="GO:0005730">
    <property type="term" value="C:nucleolus"/>
    <property type="evidence" value="ECO:0007005"/>
    <property type="project" value="PomBase"/>
</dbReference>
<dbReference type="GO" id="GO:0016151">
    <property type="term" value="F:nickel cation binding"/>
    <property type="evidence" value="ECO:0007669"/>
    <property type="project" value="InterPro"/>
</dbReference>
<dbReference type="GO" id="GO:0019627">
    <property type="term" value="P:urea metabolic process"/>
    <property type="evidence" value="ECO:0000316"/>
    <property type="project" value="PomBase"/>
</dbReference>
<dbReference type="Gene3D" id="1.10.4190.10">
    <property type="entry name" value="Urease accessory protein UreF"/>
    <property type="match status" value="1"/>
</dbReference>
<dbReference type="InterPro" id="IPR002639">
    <property type="entry name" value="UreF"/>
</dbReference>
<dbReference type="InterPro" id="IPR038277">
    <property type="entry name" value="UreF_sf"/>
</dbReference>
<dbReference type="PANTHER" id="PTHR33620">
    <property type="entry name" value="UREASE ACCESSORY PROTEIN F"/>
    <property type="match status" value="1"/>
</dbReference>
<dbReference type="PANTHER" id="PTHR33620:SF1">
    <property type="entry name" value="UREASE ACCESSORY PROTEIN F"/>
    <property type="match status" value="1"/>
</dbReference>
<dbReference type="Pfam" id="PF01730">
    <property type="entry name" value="UreF"/>
    <property type="match status" value="1"/>
</dbReference>
<dbReference type="PIRSF" id="PIRSF009467">
    <property type="entry name" value="Ureas_acces_UreF"/>
    <property type="match status" value="1"/>
</dbReference>
<name>UREF_SCHPO</name>
<keyword id="KW-0143">Chaperone</keyword>
<keyword id="KW-0963">Cytoplasm</keyword>
<keyword id="KW-0996">Nickel insertion</keyword>
<keyword id="KW-0539">Nucleus</keyword>
<keyword id="KW-1185">Reference proteome</keyword>
<evidence type="ECO:0000250" key="1"/>
<evidence type="ECO:0000269" key="2">
    <source>
    </source>
</evidence>
<evidence type="ECO:0000305" key="3"/>
<comment type="function">
    <text evidence="1">Probably facilitates nickel incorporation.</text>
</comment>
<comment type="subcellular location">
    <subcellularLocation>
        <location evidence="2">Cytoplasm</location>
    </subcellularLocation>
    <subcellularLocation>
        <location evidence="2">Nucleus</location>
    </subcellularLocation>
</comment>
<comment type="similarity">
    <text evidence="3">Belongs to the UreF family.</text>
</comment>